<accession>A2SK12</accession>
<name>RISB_METPP</name>
<proteinExistence type="inferred from homology"/>
<gene>
    <name evidence="1" type="primary">ribH</name>
    <name type="ordered locus">Mpe_A2948</name>
</gene>
<organism>
    <name type="scientific">Methylibium petroleiphilum (strain ATCC BAA-1232 / LMG 22953 / PM1)</name>
    <dbReference type="NCBI Taxonomy" id="420662"/>
    <lineage>
        <taxon>Bacteria</taxon>
        <taxon>Pseudomonadati</taxon>
        <taxon>Pseudomonadota</taxon>
        <taxon>Betaproteobacteria</taxon>
        <taxon>Burkholderiales</taxon>
        <taxon>Sphaerotilaceae</taxon>
        <taxon>Methylibium</taxon>
    </lineage>
</organism>
<reference key="1">
    <citation type="journal article" date="2007" name="J. Bacteriol.">
        <title>Whole-genome analysis of the methyl tert-butyl ether-degrading beta-proteobacterium Methylibium petroleiphilum PM1.</title>
        <authorList>
            <person name="Kane S.R."/>
            <person name="Chakicherla A.Y."/>
            <person name="Chain P.S.G."/>
            <person name="Schmidt R."/>
            <person name="Shin M.W."/>
            <person name="Legler T.C."/>
            <person name="Scow K.M."/>
            <person name="Larimer F.W."/>
            <person name="Lucas S.M."/>
            <person name="Richardson P.M."/>
            <person name="Hristova K.R."/>
        </authorList>
    </citation>
    <scope>NUCLEOTIDE SEQUENCE [LARGE SCALE GENOMIC DNA]</scope>
    <source>
        <strain>ATCC BAA-1232 / LMG 22953 / PM1</strain>
    </source>
</reference>
<keyword id="KW-1185">Reference proteome</keyword>
<keyword id="KW-0686">Riboflavin biosynthesis</keyword>
<keyword id="KW-0808">Transferase</keyword>
<comment type="function">
    <text evidence="1">Catalyzes the formation of 6,7-dimethyl-8-ribityllumazine by condensation of 5-amino-6-(D-ribitylamino)uracil with 3,4-dihydroxy-2-butanone 4-phosphate. This is the penultimate step in the biosynthesis of riboflavin.</text>
</comment>
<comment type="catalytic activity">
    <reaction evidence="1">
        <text>(2S)-2-hydroxy-3-oxobutyl phosphate + 5-amino-6-(D-ribitylamino)uracil = 6,7-dimethyl-8-(1-D-ribityl)lumazine + phosphate + 2 H2O + H(+)</text>
        <dbReference type="Rhea" id="RHEA:26152"/>
        <dbReference type="ChEBI" id="CHEBI:15377"/>
        <dbReference type="ChEBI" id="CHEBI:15378"/>
        <dbReference type="ChEBI" id="CHEBI:15934"/>
        <dbReference type="ChEBI" id="CHEBI:43474"/>
        <dbReference type="ChEBI" id="CHEBI:58201"/>
        <dbReference type="ChEBI" id="CHEBI:58830"/>
        <dbReference type="EC" id="2.5.1.78"/>
    </reaction>
</comment>
<comment type="pathway">
    <text evidence="1">Cofactor biosynthesis; riboflavin biosynthesis; riboflavin from 2-hydroxy-3-oxobutyl phosphate and 5-amino-6-(D-ribitylamino)uracil: step 1/2.</text>
</comment>
<comment type="similarity">
    <text evidence="1">Belongs to the DMRL synthase family.</text>
</comment>
<feature type="chain" id="PRO_1000040451" description="6,7-dimethyl-8-ribityllumazine synthase">
    <location>
        <begin position="1"/>
        <end position="160"/>
    </location>
</feature>
<feature type="active site" description="Proton donor" evidence="1">
    <location>
        <position position="98"/>
    </location>
</feature>
<feature type="binding site" evidence="1">
    <location>
        <position position="32"/>
    </location>
    <ligand>
        <name>5-amino-6-(D-ribitylamino)uracil</name>
        <dbReference type="ChEBI" id="CHEBI:15934"/>
    </ligand>
</feature>
<feature type="binding site" evidence="1">
    <location>
        <begin position="66"/>
        <end position="68"/>
    </location>
    <ligand>
        <name>5-amino-6-(D-ribitylamino)uracil</name>
        <dbReference type="ChEBI" id="CHEBI:15934"/>
    </ligand>
</feature>
<feature type="binding site" evidence="1">
    <location>
        <begin position="90"/>
        <end position="92"/>
    </location>
    <ligand>
        <name>5-amino-6-(D-ribitylamino)uracil</name>
        <dbReference type="ChEBI" id="CHEBI:15934"/>
    </ligand>
</feature>
<feature type="binding site" evidence="1">
    <location>
        <begin position="95"/>
        <end position="96"/>
    </location>
    <ligand>
        <name>(2S)-2-hydroxy-3-oxobutyl phosphate</name>
        <dbReference type="ChEBI" id="CHEBI:58830"/>
    </ligand>
</feature>
<feature type="binding site" evidence="1">
    <location>
        <position position="123"/>
    </location>
    <ligand>
        <name>5-amino-6-(D-ribitylamino)uracil</name>
        <dbReference type="ChEBI" id="CHEBI:15934"/>
    </ligand>
</feature>
<feature type="binding site" evidence="1">
    <location>
        <position position="137"/>
    </location>
    <ligand>
        <name>(2S)-2-hydroxy-3-oxobutyl phosphate</name>
        <dbReference type="ChEBI" id="CHEBI:58830"/>
    </ligand>
</feature>
<sequence length="160" mass="17293">MQDADTQTTIFGNTVAELVGENLRIGIVQARFNAALTDRLAQACLVELELLGVSAKHIEHVSVPGALEIPIALQAMARRKDFDALIALGCIIRGETYHFELVSNESGAGVTRVSLDHATPIANAILTVENEDQAWARVDDKGRDAARVAVEMVNLMEELS</sequence>
<evidence type="ECO:0000255" key="1">
    <source>
        <dbReference type="HAMAP-Rule" id="MF_00178"/>
    </source>
</evidence>
<protein>
    <recommendedName>
        <fullName evidence="1">6,7-dimethyl-8-ribityllumazine synthase</fullName>
        <shortName evidence="1">DMRL synthase</shortName>
        <shortName evidence="1">LS</shortName>
        <shortName evidence="1">Lumazine synthase</shortName>
        <ecNumber evidence="1">2.5.1.78</ecNumber>
    </recommendedName>
</protein>
<dbReference type="EC" id="2.5.1.78" evidence="1"/>
<dbReference type="EMBL" id="CP000555">
    <property type="protein sequence ID" value="ABM95901.1"/>
    <property type="molecule type" value="Genomic_DNA"/>
</dbReference>
<dbReference type="RefSeq" id="WP_011830530.1">
    <property type="nucleotide sequence ID" value="NC_008825.1"/>
</dbReference>
<dbReference type="SMR" id="A2SK12"/>
<dbReference type="STRING" id="420662.Mpe_A2948"/>
<dbReference type="KEGG" id="mpt:Mpe_A2948"/>
<dbReference type="eggNOG" id="COG0054">
    <property type="taxonomic scope" value="Bacteria"/>
</dbReference>
<dbReference type="HOGENOM" id="CLU_089358_1_2_4"/>
<dbReference type="UniPathway" id="UPA00275">
    <property type="reaction ID" value="UER00404"/>
</dbReference>
<dbReference type="Proteomes" id="UP000000366">
    <property type="component" value="Chromosome"/>
</dbReference>
<dbReference type="GO" id="GO:0005829">
    <property type="term" value="C:cytosol"/>
    <property type="evidence" value="ECO:0007669"/>
    <property type="project" value="TreeGrafter"/>
</dbReference>
<dbReference type="GO" id="GO:0009349">
    <property type="term" value="C:riboflavin synthase complex"/>
    <property type="evidence" value="ECO:0007669"/>
    <property type="project" value="InterPro"/>
</dbReference>
<dbReference type="GO" id="GO:0000906">
    <property type="term" value="F:6,7-dimethyl-8-ribityllumazine synthase activity"/>
    <property type="evidence" value="ECO:0007669"/>
    <property type="project" value="UniProtKB-UniRule"/>
</dbReference>
<dbReference type="GO" id="GO:0009231">
    <property type="term" value="P:riboflavin biosynthetic process"/>
    <property type="evidence" value="ECO:0007669"/>
    <property type="project" value="UniProtKB-UniRule"/>
</dbReference>
<dbReference type="CDD" id="cd09209">
    <property type="entry name" value="Lumazine_synthase-I"/>
    <property type="match status" value="1"/>
</dbReference>
<dbReference type="Gene3D" id="3.40.50.960">
    <property type="entry name" value="Lumazine/riboflavin synthase"/>
    <property type="match status" value="1"/>
</dbReference>
<dbReference type="HAMAP" id="MF_00178">
    <property type="entry name" value="Lumazine_synth"/>
    <property type="match status" value="1"/>
</dbReference>
<dbReference type="InterPro" id="IPR034964">
    <property type="entry name" value="LS"/>
</dbReference>
<dbReference type="InterPro" id="IPR002180">
    <property type="entry name" value="LS/RS"/>
</dbReference>
<dbReference type="InterPro" id="IPR036467">
    <property type="entry name" value="LS/RS_sf"/>
</dbReference>
<dbReference type="NCBIfam" id="TIGR00114">
    <property type="entry name" value="lumazine-synth"/>
    <property type="match status" value="1"/>
</dbReference>
<dbReference type="PANTHER" id="PTHR21058:SF0">
    <property type="entry name" value="6,7-DIMETHYL-8-RIBITYLLUMAZINE SYNTHASE"/>
    <property type="match status" value="1"/>
</dbReference>
<dbReference type="PANTHER" id="PTHR21058">
    <property type="entry name" value="6,7-DIMETHYL-8-RIBITYLLUMAZINE SYNTHASE DMRL SYNTHASE LUMAZINE SYNTHASE"/>
    <property type="match status" value="1"/>
</dbReference>
<dbReference type="Pfam" id="PF00885">
    <property type="entry name" value="DMRL_synthase"/>
    <property type="match status" value="1"/>
</dbReference>
<dbReference type="SUPFAM" id="SSF52121">
    <property type="entry name" value="Lumazine synthase"/>
    <property type="match status" value="1"/>
</dbReference>